<proteinExistence type="inferred from homology"/>
<gene>
    <name evidence="1" type="primary">xseA</name>
    <name type="ordered locus">CA_C2082</name>
</gene>
<evidence type="ECO:0000255" key="1">
    <source>
        <dbReference type="HAMAP-Rule" id="MF_00378"/>
    </source>
</evidence>
<feature type="chain" id="PRO_0000197839" description="Exodeoxyribonuclease 7 large subunit">
    <location>
        <begin position="1"/>
        <end position="399"/>
    </location>
</feature>
<sequence length="399" mass="44962">MYIKVLSVSELNNYIKRVVDSDYILSNAQVKGEISNFKFHSSGHVYFSLKDEGGKINCIMFRSNAEKLKFIPENGMKVNVKGRVSVYVKDGAYQLYCTEITPEGRGELYEAFEKLKEKLLNEGMFSEEHKRNIPKYPKMIGVITSPTGAAIRDIINVATRRNKSVDMIICPTLVQGVNAPGELIKALDYLNNREDIDTIILARGGGSIEELWAFNDEKLAYAVYNSKKPVVTGVGHETDFTIVDFVSDRRAPTPSAAAEIAVPNINEEMNSFVSLKRALDTSIKTYIQNKCNQLEIAKRMLEKNSPEILIVNGYSSIDNFKYVLDMRIANKIKIEKEKILRYNSILKSNSPINILNKGYSIISDEIGNNISNVDKLKEPDKVHITFKDGKVNAKIDILR</sequence>
<comment type="function">
    <text evidence="1">Bidirectionally degrades single-stranded DNA into large acid-insoluble oligonucleotides, which are then degraded further into small acid-soluble oligonucleotides.</text>
</comment>
<comment type="catalytic activity">
    <reaction evidence="1">
        <text>Exonucleolytic cleavage in either 5'- to 3'- or 3'- to 5'-direction to yield nucleoside 5'-phosphates.</text>
        <dbReference type="EC" id="3.1.11.6"/>
    </reaction>
</comment>
<comment type="subunit">
    <text evidence="1">Heterooligomer composed of large and small subunits.</text>
</comment>
<comment type="subcellular location">
    <subcellularLocation>
        <location evidence="1">Cytoplasm</location>
    </subcellularLocation>
</comment>
<comment type="similarity">
    <text evidence="1">Belongs to the XseA family.</text>
</comment>
<name>EX7L_CLOAB</name>
<accession>Q97HD0</accession>
<protein>
    <recommendedName>
        <fullName evidence="1">Exodeoxyribonuclease 7 large subunit</fullName>
        <ecNumber evidence="1">3.1.11.6</ecNumber>
    </recommendedName>
    <alternativeName>
        <fullName evidence="1">Exodeoxyribonuclease VII large subunit</fullName>
        <shortName evidence="1">Exonuclease VII large subunit</shortName>
    </alternativeName>
</protein>
<dbReference type="EC" id="3.1.11.6" evidence="1"/>
<dbReference type="EMBL" id="AE001437">
    <property type="protein sequence ID" value="AAK80041.1"/>
    <property type="molecule type" value="Genomic_DNA"/>
</dbReference>
<dbReference type="PIR" id="F97156">
    <property type="entry name" value="F97156"/>
</dbReference>
<dbReference type="RefSeq" id="NP_348701.1">
    <property type="nucleotide sequence ID" value="NC_003030.1"/>
</dbReference>
<dbReference type="RefSeq" id="WP_010965382.1">
    <property type="nucleotide sequence ID" value="NC_003030.1"/>
</dbReference>
<dbReference type="SMR" id="Q97HD0"/>
<dbReference type="STRING" id="272562.CA_C2082"/>
<dbReference type="DNASU" id="1118265"/>
<dbReference type="KEGG" id="cac:CA_C2082"/>
<dbReference type="PATRIC" id="fig|272562.8.peg.2285"/>
<dbReference type="eggNOG" id="COG1570">
    <property type="taxonomic scope" value="Bacteria"/>
</dbReference>
<dbReference type="HOGENOM" id="CLU_023625_2_0_9"/>
<dbReference type="OrthoDB" id="9802795at2"/>
<dbReference type="Proteomes" id="UP000000814">
    <property type="component" value="Chromosome"/>
</dbReference>
<dbReference type="GO" id="GO:0005737">
    <property type="term" value="C:cytoplasm"/>
    <property type="evidence" value="ECO:0007669"/>
    <property type="project" value="UniProtKB-SubCell"/>
</dbReference>
<dbReference type="GO" id="GO:0009318">
    <property type="term" value="C:exodeoxyribonuclease VII complex"/>
    <property type="evidence" value="ECO:0007669"/>
    <property type="project" value="InterPro"/>
</dbReference>
<dbReference type="GO" id="GO:0008855">
    <property type="term" value="F:exodeoxyribonuclease VII activity"/>
    <property type="evidence" value="ECO:0007669"/>
    <property type="project" value="UniProtKB-UniRule"/>
</dbReference>
<dbReference type="GO" id="GO:0003676">
    <property type="term" value="F:nucleic acid binding"/>
    <property type="evidence" value="ECO:0007669"/>
    <property type="project" value="InterPro"/>
</dbReference>
<dbReference type="GO" id="GO:0006308">
    <property type="term" value="P:DNA catabolic process"/>
    <property type="evidence" value="ECO:0007669"/>
    <property type="project" value="UniProtKB-UniRule"/>
</dbReference>
<dbReference type="CDD" id="cd04489">
    <property type="entry name" value="ExoVII_LU_OBF"/>
    <property type="match status" value="1"/>
</dbReference>
<dbReference type="HAMAP" id="MF_00378">
    <property type="entry name" value="Exonuc_7_L"/>
    <property type="match status" value="1"/>
</dbReference>
<dbReference type="InterPro" id="IPR003753">
    <property type="entry name" value="Exonuc_VII_L"/>
</dbReference>
<dbReference type="InterPro" id="IPR020579">
    <property type="entry name" value="Exonuc_VII_lsu_C"/>
</dbReference>
<dbReference type="InterPro" id="IPR025824">
    <property type="entry name" value="OB-fold_nuc-bd_dom"/>
</dbReference>
<dbReference type="NCBIfam" id="TIGR00237">
    <property type="entry name" value="xseA"/>
    <property type="match status" value="1"/>
</dbReference>
<dbReference type="PANTHER" id="PTHR30008">
    <property type="entry name" value="EXODEOXYRIBONUCLEASE 7 LARGE SUBUNIT"/>
    <property type="match status" value="1"/>
</dbReference>
<dbReference type="PANTHER" id="PTHR30008:SF0">
    <property type="entry name" value="EXODEOXYRIBONUCLEASE 7 LARGE SUBUNIT"/>
    <property type="match status" value="1"/>
</dbReference>
<dbReference type="Pfam" id="PF02601">
    <property type="entry name" value="Exonuc_VII_L"/>
    <property type="match status" value="2"/>
</dbReference>
<dbReference type="Pfam" id="PF13742">
    <property type="entry name" value="tRNA_anti_2"/>
    <property type="match status" value="1"/>
</dbReference>
<organism>
    <name type="scientific">Clostridium acetobutylicum (strain ATCC 824 / DSM 792 / JCM 1419 / IAM 19013 / LMG 5710 / NBRC 13948 / NRRL B-527 / VKM B-1787 / 2291 / W)</name>
    <dbReference type="NCBI Taxonomy" id="272562"/>
    <lineage>
        <taxon>Bacteria</taxon>
        <taxon>Bacillati</taxon>
        <taxon>Bacillota</taxon>
        <taxon>Clostridia</taxon>
        <taxon>Eubacteriales</taxon>
        <taxon>Clostridiaceae</taxon>
        <taxon>Clostridium</taxon>
    </lineage>
</organism>
<keyword id="KW-0963">Cytoplasm</keyword>
<keyword id="KW-0269">Exonuclease</keyword>
<keyword id="KW-0378">Hydrolase</keyword>
<keyword id="KW-0540">Nuclease</keyword>
<keyword id="KW-1185">Reference proteome</keyword>
<reference key="1">
    <citation type="journal article" date="2001" name="J. Bacteriol.">
        <title>Genome sequence and comparative analysis of the solvent-producing bacterium Clostridium acetobutylicum.</title>
        <authorList>
            <person name="Noelling J."/>
            <person name="Breton G."/>
            <person name="Omelchenko M.V."/>
            <person name="Makarova K.S."/>
            <person name="Zeng Q."/>
            <person name="Gibson R."/>
            <person name="Lee H.M."/>
            <person name="Dubois J."/>
            <person name="Qiu D."/>
            <person name="Hitti J."/>
            <person name="Wolf Y.I."/>
            <person name="Tatusov R.L."/>
            <person name="Sabathe F."/>
            <person name="Doucette-Stamm L.A."/>
            <person name="Soucaille P."/>
            <person name="Daly M.J."/>
            <person name="Bennett G.N."/>
            <person name="Koonin E.V."/>
            <person name="Smith D.R."/>
        </authorList>
    </citation>
    <scope>NUCLEOTIDE SEQUENCE [LARGE SCALE GENOMIC DNA]</scope>
    <source>
        <strain>ATCC 824 / DSM 792 / JCM 1419 / IAM 19013 / LMG 5710 / NBRC 13948 / NRRL B-527 / VKM B-1787 / 2291 / W</strain>
    </source>
</reference>